<protein>
    <recommendedName>
        <fullName evidence="1">UPF0200 protein Mboo_1593</fullName>
    </recommendedName>
</protein>
<reference key="1">
    <citation type="journal article" date="2015" name="Microbiology">
        <title>Genome of Methanoregula boonei 6A8 reveals adaptations to oligotrophic peatland environments.</title>
        <authorList>
            <person name="Braeuer S."/>
            <person name="Cadillo-Quiroz H."/>
            <person name="Kyrpides N."/>
            <person name="Woyke T."/>
            <person name="Goodwin L."/>
            <person name="Detter C."/>
            <person name="Podell S."/>
            <person name="Yavitt J.B."/>
            <person name="Zinder S.H."/>
        </authorList>
    </citation>
    <scope>NUCLEOTIDE SEQUENCE [LARGE SCALE GENOMIC DNA]</scope>
    <source>
        <strain>DSM 21154 / JCM 14090 / 6A8</strain>
    </source>
</reference>
<feature type="chain" id="PRO_1000084870" description="UPF0200 protein Mboo_1593">
    <location>
        <begin position="1"/>
        <end position="182"/>
    </location>
</feature>
<feature type="binding site" evidence="1">
    <location>
        <begin position="8"/>
        <end position="15"/>
    </location>
    <ligand>
        <name>ATP</name>
        <dbReference type="ChEBI" id="CHEBI:30616"/>
    </ligand>
</feature>
<sequence>MNVIGVVGLPASGKGEFSKIAEGLGIPVVVMGDVIRNAVKKAGLPPTDENLGAMANRLRAERGMDAIAILCVDAVKEQKARLVLIDGIRGDAEVRVFREHFPGFRLIAIETSFEKRLSRLCERKRSDDVGSAEGLLTRDKRELGWGLGNALQLADIRLNNDGSLEEFTARVTDLIHSMEREP</sequence>
<dbReference type="EMBL" id="CP000780">
    <property type="protein sequence ID" value="ABS56110.1"/>
    <property type="molecule type" value="Genomic_DNA"/>
</dbReference>
<dbReference type="RefSeq" id="WP_012107154.1">
    <property type="nucleotide sequence ID" value="NC_009712.1"/>
</dbReference>
<dbReference type="SMR" id="A7I8P9"/>
<dbReference type="STRING" id="456442.Mboo_1593"/>
<dbReference type="GeneID" id="5410907"/>
<dbReference type="KEGG" id="mbn:Mboo_1593"/>
<dbReference type="eggNOG" id="arCOG01045">
    <property type="taxonomic scope" value="Archaea"/>
</dbReference>
<dbReference type="HOGENOM" id="CLU_096329_0_0_2"/>
<dbReference type="OrthoDB" id="85381at2157"/>
<dbReference type="Proteomes" id="UP000002408">
    <property type="component" value="Chromosome"/>
</dbReference>
<dbReference type="GO" id="GO:0005524">
    <property type="term" value="F:ATP binding"/>
    <property type="evidence" value="ECO:0007669"/>
    <property type="project" value="UniProtKB-UniRule"/>
</dbReference>
<dbReference type="Gene3D" id="3.40.50.300">
    <property type="entry name" value="P-loop containing nucleotide triphosphate hydrolases"/>
    <property type="match status" value="1"/>
</dbReference>
<dbReference type="HAMAP" id="MF_01111">
    <property type="entry name" value="UPF0200"/>
    <property type="match status" value="1"/>
</dbReference>
<dbReference type="InterPro" id="IPR022970">
    <property type="entry name" value="NTP_hydrolase-rel"/>
</dbReference>
<dbReference type="InterPro" id="IPR027417">
    <property type="entry name" value="P-loop_NTPase"/>
</dbReference>
<dbReference type="PANTHER" id="PTHR41930:SF1">
    <property type="entry name" value="DEPHOSPHO-COA KINASE"/>
    <property type="match status" value="1"/>
</dbReference>
<dbReference type="PANTHER" id="PTHR41930">
    <property type="entry name" value="UPF0200 PROTEIN MJ1399"/>
    <property type="match status" value="1"/>
</dbReference>
<dbReference type="Pfam" id="PF13207">
    <property type="entry name" value="AAA_17"/>
    <property type="match status" value="1"/>
</dbReference>
<dbReference type="SUPFAM" id="SSF52540">
    <property type="entry name" value="P-loop containing nucleoside triphosphate hydrolases"/>
    <property type="match status" value="1"/>
</dbReference>
<comment type="similarity">
    <text evidence="1">Belongs to the UPF0200 family.</text>
</comment>
<name>Y1593_METB6</name>
<organism>
    <name type="scientific">Methanoregula boonei (strain DSM 21154 / JCM 14090 / 6A8)</name>
    <dbReference type="NCBI Taxonomy" id="456442"/>
    <lineage>
        <taxon>Archaea</taxon>
        <taxon>Methanobacteriati</taxon>
        <taxon>Methanobacteriota</taxon>
        <taxon>Stenosarchaea group</taxon>
        <taxon>Methanomicrobia</taxon>
        <taxon>Methanomicrobiales</taxon>
        <taxon>Methanoregulaceae</taxon>
        <taxon>Methanoregula</taxon>
    </lineage>
</organism>
<evidence type="ECO:0000255" key="1">
    <source>
        <dbReference type="HAMAP-Rule" id="MF_01111"/>
    </source>
</evidence>
<gene>
    <name type="ordered locus">Mboo_1593</name>
</gene>
<accession>A7I8P9</accession>
<proteinExistence type="inferred from homology"/>
<keyword id="KW-0067">ATP-binding</keyword>
<keyword id="KW-0547">Nucleotide-binding</keyword>
<keyword id="KW-1185">Reference proteome</keyword>